<name>GATC_BRUC2</name>
<proteinExistence type="inferred from homology"/>
<organism>
    <name type="scientific">Brucella canis (strain ATCC 23365 / NCTC 10854 / RM-666)</name>
    <dbReference type="NCBI Taxonomy" id="483179"/>
    <lineage>
        <taxon>Bacteria</taxon>
        <taxon>Pseudomonadati</taxon>
        <taxon>Pseudomonadota</taxon>
        <taxon>Alphaproteobacteria</taxon>
        <taxon>Hyphomicrobiales</taxon>
        <taxon>Brucellaceae</taxon>
        <taxon>Brucella/Ochrobactrum group</taxon>
        <taxon>Brucella</taxon>
    </lineage>
</organism>
<accession>A9MBN5</accession>
<comment type="function">
    <text evidence="1">Allows the formation of correctly charged Asn-tRNA(Asn) or Gln-tRNA(Gln) through the transamidation of misacylated Asp-tRNA(Asn) or Glu-tRNA(Gln) in organisms which lack either or both of asparaginyl-tRNA or glutaminyl-tRNA synthetases. The reaction takes place in the presence of glutamine and ATP through an activated phospho-Asp-tRNA(Asn) or phospho-Glu-tRNA(Gln).</text>
</comment>
<comment type="catalytic activity">
    <reaction evidence="1">
        <text>L-glutamyl-tRNA(Gln) + L-glutamine + ATP + H2O = L-glutaminyl-tRNA(Gln) + L-glutamate + ADP + phosphate + H(+)</text>
        <dbReference type="Rhea" id="RHEA:17521"/>
        <dbReference type="Rhea" id="RHEA-COMP:9681"/>
        <dbReference type="Rhea" id="RHEA-COMP:9684"/>
        <dbReference type="ChEBI" id="CHEBI:15377"/>
        <dbReference type="ChEBI" id="CHEBI:15378"/>
        <dbReference type="ChEBI" id="CHEBI:29985"/>
        <dbReference type="ChEBI" id="CHEBI:30616"/>
        <dbReference type="ChEBI" id="CHEBI:43474"/>
        <dbReference type="ChEBI" id="CHEBI:58359"/>
        <dbReference type="ChEBI" id="CHEBI:78520"/>
        <dbReference type="ChEBI" id="CHEBI:78521"/>
        <dbReference type="ChEBI" id="CHEBI:456216"/>
    </reaction>
</comment>
<comment type="catalytic activity">
    <reaction evidence="1">
        <text>L-aspartyl-tRNA(Asn) + L-glutamine + ATP + H2O = L-asparaginyl-tRNA(Asn) + L-glutamate + ADP + phosphate + 2 H(+)</text>
        <dbReference type="Rhea" id="RHEA:14513"/>
        <dbReference type="Rhea" id="RHEA-COMP:9674"/>
        <dbReference type="Rhea" id="RHEA-COMP:9677"/>
        <dbReference type="ChEBI" id="CHEBI:15377"/>
        <dbReference type="ChEBI" id="CHEBI:15378"/>
        <dbReference type="ChEBI" id="CHEBI:29985"/>
        <dbReference type="ChEBI" id="CHEBI:30616"/>
        <dbReference type="ChEBI" id="CHEBI:43474"/>
        <dbReference type="ChEBI" id="CHEBI:58359"/>
        <dbReference type="ChEBI" id="CHEBI:78515"/>
        <dbReference type="ChEBI" id="CHEBI:78516"/>
        <dbReference type="ChEBI" id="CHEBI:456216"/>
    </reaction>
</comment>
<comment type="subunit">
    <text evidence="1">Heterotrimer of A, B and C subunits.</text>
</comment>
<comment type="similarity">
    <text evidence="1">Belongs to the GatC family.</text>
</comment>
<dbReference type="EC" id="6.3.5.-" evidence="1"/>
<dbReference type="EMBL" id="CP000873">
    <property type="protein sequence ID" value="ABX63772.1"/>
    <property type="molecule type" value="Genomic_DNA"/>
</dbReference>
<dbReference type="RefSeq" id="WP_002966038.1">
    <property type="nucleotide sequence ID" value="NC_010104.1"/>
</dbReference>
<dbReference type="SMR" id="A9MBN5"/>
<dbReference type="GeneID" id="97535281"/>
<dbReference type="KEGG" id="bcs:BCAN_B0596"/>
<dbReference type="HOGENOM" id="CLU_105899_2_0_5"/>
<dbReference type="Proteomes" id="UP000001385">
    <property type="component" value="Chromosome II"/>
</dbReference>
<dbReference type="GO" id="GO:0050566">
    <property type="term" value="F:asparaginyl-tRNA synthase (glutamine-hydrolyzing) activity"/>
    <property type="evidence" value="ECO:0007669"/>
    <property type="project" value="RHEA"/>
</dbReference>
<dbReference type="GO" id="GO:0005524">
    <property type="term" value="F:ATP binding"/>
    <property type="evidence" value="ECO:0007669"/>
    <property type="project" value="UniProtKB-KW"/>
</dbReference>
<dbReference type="GO" id="GO:0050567">
    <property type="term" value="F:glutaminyl-tRNA synthase (glutamine-hydrolyzing) activity"/>
    <property type="evidence" value="ECO:0007669"/>
    <property type="project" value="UniProtKB-UniRule"/>
</dbReference>
<dbReference type="GO" id="GO:0070681">
    <property type="term" value="P:glutaminyl-tRNAGln biosynthesis via transamidation"/>
    <property type="evidence" value="ECO:0007669"/>
    <property type="project" value="TreeGrafter"/>
</dbReference>
<dbReference type="GO" id="GO:0006450">
    <property type="term" value="P:regulation of translational fidelity"/>
    <property type="evidence" value="ECO:0007669"/>
    <property type="project" value="InterPro"/>
</dbReference>
<dbReference type="GO" id="GO:0006412">
    <property type="term" value="P:translation"/>
    <property type="evidence" value="ECO:0007669"/>
    <property type="project" value="UniProtKB-UniRule"/>
</dbReference>
<dbReference type="Gene3D" id="1.10.20.60">
    <property type="entry name" value="Glu-tRNAGln amidotransferase C subunit, N-terminal domain"/>
    <property type="match status" value="1"/>
</dbReference>
<dbReference type="HAMAP" id="MF_00122">
    <property type="entry name" value="GatC"/>
    <property type="match status" value="1"/>
</dbReference>
<dbReference type="InterPro" id="IPR036113">
    <property type="entry name" value="Asp/Glu-ADT_sf_sub_c"/>
</dbReference>
<dbReference type="InterPro" id="IPR003837">
    <property type="entry name" value="GatC"/>
</dbReference>
<dbReference type="NCBIfam" id="TIGR00135">
    <property type="entry name" value="gatC"/>
    <property type="match status" value="1"/>
</dbReference>
<dbReference type="PANTHER" id="PTHR15004">
    <property type="entry name" value="GLUTAMYL-TRNA(GLN) AMIDOTRANSFERASE SUBUNIT C, MITOCHONDRIAL"/>
    <property type="match status" value="1"/>
</dbReference>
<dbReference type="PANTHER" id="PTHR15004:SF0">
    <property type="entry name" value="GLUTAMYL-TRNA(GLN) AMIDOTRANSFERASE SUBUNIT C, MITOCHONDRIAL"/>
    <property type="match status" value="1"/>
</dbReference>
<dbReference type="Pfam" id="PF02686">
    <property type="entry name" value="GatC"/>
    <property type="match status" value="1"/>
</dbReference>
<dbReference type="SUPFAM" id="SSF141000">
    <property type="entry name" value="Glu-tRNAGln amidotransferase C subunit"/>
    <property type="match status" value="1"/>
</dbReference>
<feature type="chain" id="PRO_1000076176" description="Aspartyl/glutamyl-tRNA(Asn/Gln) amidotransferase subunit C">
    <location>
        <begin position="1"/>
        <end position="95"/>
    </location>
</feature>
<keyword id="KW-0067">ATP-binding</keyword>
<keyword id="KW-0436">Ligase</keyword>
<keyword id="KW-0547">Nucleotide-binding</keyword>
<keyword id="KW-0648">Protein biosynthesis</keyword>
<keyword id="KW-1185">Reference proteome</keyword>
<evidence type="ECO:0000255" key="1">
    <source>
        <dbReference type="HAMAP-Rule" id="MF_00122"/>
    </source>
</evidence>
<gene>
    <name evidence="1" type="primary">gatC</name>
    <name type="ordered locus">BCAN_B0596</name>
</gene>
<reference key="1">
    <citation type="submission" date="2007-10" db="EMBL/GenBank/DDBJ databases">
        <title>Brucella canis ATCC 23365 whole genome shotgun sequencing project.</title>
        <authorList>
            <person name="Setubal J.C."/>
            <person name="Bowns C."/>
            <person name="Boyle S."/>
            <person name="Crasta O.R."/>
            <person name="Czar M.J."/>
            <person name="Dharmanolla C."/>
            <person name="Gillespie J.J."/>
            <person name="Kenyon R.W."/>
            <person name="Lu J."/>
            <person name="Mane S."/>
            <person name="Mohapatra S."/>
            <person name="Nagrani S."/>
            <person name="Purkayastha A."/>
            <person name="Rajasimha H.K."/>
            <person name="Shallom J.M."/>
            <person name="Shallom S."/>
            <person name="Shukla M."/>
            <person name="Snyder E.E."/>
            <person name="Sobral B.W."/>
            <person name="Wattam A.R."/>
            <person name="Will R."/>
            <person name="Williams K."/>
            <person name="Yoo H."/>
            <person name="Bruce D."/>
            <person name="Detter C."/>
            <person name="Munk C."/>
            <person name="Brettin T.S."/>
        </authorList>
    </citation>
    <scope>NUCLEOTIDE SEQUENCE [LARGE SCALE GENOMIC DNA]</scope>
    <source>
        <strain>ATCC 23365 / NCTC 10854 / RM-666</strain>
    </source>
</reference>
<protein>
    <recommendedName>
        <fullName evidence="1">Aspartyl/glutamyl-tRNA(Asn/Gln) amidotransferase subunit C</fullName>
        <shortName evidence="1">Asp/Glu-ADT subunit C</shortName>
        <ecNumber evidence="1">6.3.5.-</ecNumber>
    </recommendedName>
</protein>
<sequence length="95" mass="10303">MSVDISTVKRVAHLARIAVSEDDAERMTGELNAILGFVEQLNEVDVEGIEPMTSVTPMKMRMREDKVTDGGIAAAVVANAPVTEDNFFVVPKVVE</sequence>